<dbReference type="EMBL" id="AP009384">
    <property type="protein sequence ID" value="BAF89922.1"/>
    <property type="molecule type" value="Genomic_DNA"/>
</dbReference>
<dbReference type="EMBL" id="X69959">
    <property type="protein sequence ID" value="CAA49583.1"/>
    <property type="molecule type" value="Genomic_DNA"/>
</dbReference>
<dbReference type="PIR" id="S33581">
    <property type="entry name" value="S33581"/>
</dbReference>
<dbReference type="STRING" id="438753.AZC_3924"/>
<dbReference type="KEGG" id="azc:AZC_3924"/>
<dbReference type="HOGENOM" id="CLU_2520497_0_0_5"/>
<dbReference type="Proteomes" id="UP000000270">
    <property type="component" value="Chromosome"/>
</dbReference>
<proteinExistence type="predicted"/>
<protein>
    <recommendedName>
        <fullName>Uncharacterized protein AZC_3924</fullName>
    </recommendedName>
    <alternativeName>
        <fullName>ORF3</fullName>
    </alternativeName>
</protein>
<reference key="1">
    <citation type="submission" date="2007-04" db="EMBL/GenBank/DDBJ databases">
        <title>Complete genome sequence of the nitrogen-fixing bacterium Azorhizobium caulinodans ORS571.</title>
        <authorList>
            <person name="Lee K.B."/>
            <person name="Backer P.D."/>
            <person name="Aono T."/>
            <person name="Liu C.T."/>
            <person name="Suzuki S."/>
            <person name="Suzuki T."/>
            <person name="Kaneko T."/>
            <person name="Yamada M."/>
            <person name="Tabata S."/>
            <person name="Kupfer D.M."/>
            <person name="Najar F.Z."/>
            <person name="Wiley G.B."/>
            <person name="Roe B."/>
            <person name="Binnewies T."/>
            <person name="Ussery D."/>
            <person name="Vereecke D."/>
            <person name="Gevers D."/>
            <person name="Holsters M."/>
            <person name="Oyaizu H."/>
        </authorList>
    </citation>
    <scope>NUCLEOTIDE SEQUENCE [LARGE SCALE GENOMIC DNA]</scope>
    <source>
        <strain>ATCC 43989 / DSM 5975 / JCM 20966 / LMG 6465 / NBRC 14845 / NCIMB 13405 / ORS 571</strain>
    </source>
</reference>
<reference key="2">
    <citation type="journal article" date="1993" name="Mol. Plant Microbe Interact.">
        <title>Azorhizobium caulinodans nitrogen fixation (nif/fix) gene regulation: mutagenesis of the nifA -24/-12 promoter element, characterization of a ntrA(rpoN) gene, and derivation of a model.</title>
        <authorList>
            <person name="Stigter J."/>
            <person name="Schneider M."/>
            <person name="de Bruijn F.J."/>
        </authorList>
    </citation>
    <scope>NUCLEOTIDE SEQUENCE [GENOMIC DNA] OF 1-68</scope>
</reference>
<gene>
    <name type="ordered locus">AZC_3924</name>
</gene>
<name>Y3924_AZOC5</name>
<feature type="chain" id="PRO_0000066466" description="Uncharacterized protein AZC_3924">
    <location>
        <begin position="1"/>
        <end position="84"/>
    </location>
</feature>
<sequence>MTDHECEIRSVDGSWEAVGVEEALGLPSSLLKRCPECHGRVRVHRASVNGMRAHFEHMEAHRGCSLSRGVQFSGVSSPHPAALD</sequence>
<keyword id="KW-1185">Reference proteome</keyword>
<organism>
    <name type="scientific">Azorhizobium caulinodans (strain ATCC 43989 / DSM 5975 / JCM 20966 / LMG 6465 / NBRC 14845 / NCIMB 13405 / ORS 571)</name>
    <dbReference type="NCBI Taxonomy" id="438753"/>
    <lineage>
        <taxon>Bacteria</taxon>
        <taxon>Pseudomonadati</taxon>
        <taxon>Pseudomonadota</taxon>
        <taxon>Alphaproteobacteria</taxon>
        <taxon>Hyphomicrobiales</taxon>
        <taxon>Xanthobacteraceae</taxon>
        <taxon>Azorhizobium</taxon>
    </lineage>
</organism>
<accession>P33988</accession>
<accession>A8IKL4</accession>